<comment type="function">
    <text evidence="1">Splits dipeptides with a prolyl residue in the C-terminal position.</text>
</comment>
<comment type="catalytic activity">
    <reaction evidence="1">
        <text>Xaa-L-Pro dipeptide + H2O = an L-alpha-amino acid + L-proline</text>
        <dbReference type="Rhea" id="RHEA:76407"/>
        <dbReference type="ChEBI" id="CHEBI:15377"/>
        <dbReference type="ChEBI" id="CHEBI:59869"/>
        <dbReference type="ChEBI" id="CHEBI:60039"/>
        <dbReference type="ChEBI" id="CHEBI:195196"/>
        <dbReference type="EC" id="3.4.13.9"/>
    </reaction>
</comment>
<comment type="cofactor">
    <cofactor evidence="1">
        <name>Mn(2+)</name>
        <dbReference type="ChEBI" id="CHEBI:29035"/>
    </cofactor>
    <text evidence="1">Binds 2 manganese ions per subunit.</text>
</comment>
<comment type="similarity">
    <text evidence="1">Belongs to the peptidase M24B family. Bacterial-type prolidase subfamily.</text>
</comment>
<protein>
    <recommendedName>
        <fullName evidence="1">Xaa-Pro dipeptidase</fullName>
        <shortName evidence="1">X-Pro dipeptidase</shortName>
        <ecNumber evidence="1">3.4.13.9</ecNumber>
    </recommendedName>
    <alternativeName>
        <fullName evidence="1">Imidodipeptidase</fullName>
    </alternativeName>
    <alternativeName>
        <fullName evidence="1">Proline dipeptidase</fullName>
        <shortName evidence="1">Prolidase</shortName>
    </alternativeName>
</protein>
<gene>
    <name evidence="1" type="primary">pepQ</name>
    <name type="ordered locus">YPA_3435</name>
</gene>
<sequence>METLASLYNEHLSTLQQRTRDVLERHQLDALLIHSGELQRLFLDDRDYPFKVNPQFKAWVPVTEVPNCWLWVDGVNTPKLWFYSPVDYWHSVEPLPDSFWTKNIDVQPLLNADDIAQQLPVQRERVAYIGYAQQRAQALGFSAENINPQPVLDYLHYYRSYKTDYELACMREAQKTAVVGHRAAYEAFQSGMSEFDINLAYLMATGHRDTDVPYDNIVALNEHSAVLHYTILQHQPPAEIRSFLIDAGAEYNGYAADLTRTYTADRDSDFAALISDLNTEQLALIDTIKSGERYTDYHVQMHQRIAKLLRTHNLVTGISEEAMVEQGITCPFLPHGLGHPLGLQVHDTAGFMQDDKGTNLNAPSKYPYLRCTRVLQPRMVLTIEPGLYFIDSLLAPWRIGEFSKHFNWDRIDALKPYGGIRIEDNIVIHDKRVENMTRDLKLA</sequence>
<feature type="chain" id="PRO_0000303880" description="Xaa-Pro dipeptidase">
    <location>
        <begin position="1"/>
        <end position="443"/>
    </location>
</feature>
<feature type="binding site" evidence="1">
    <location>
        <position position="246"/>
    </location>
    <ligand>
        <name>Mn(2+)</name>
        <dbReference type="ChEBI" id="CHEBI:29035"/>
        <label>2</label>
    </ligand>
</feature>
<feature type="binding site" evidence="1">
    <location>
        <position position="257"/>
    </location>
    <ligand>
        <name>Mn(2+)</name>
        <dbReference type="ChEBI" id="CHEBI:29035"/>
        <label>1</label>
    </ligand>
</feature>
<feature type="binding site" evidence="1">
    <location>
        <position position="257"/>
    </location>
    <ligand>
        <name>Mn(2+)</name>
        <dbReference type="ChEBI" id="CHEBI:29035"/>
        <label>2</label>
    </ligand>
</feature>
<feature type="binding site" evidence="1">
    <location>
        <position position="339"/>
    </location>
    <ligand>
        <name>Mn(2+)</name>
        <dbReference type="ChEBI" id="CHEBI:29035"/>
        <label>1</label>
    </ligand>
</feature>
<feature type="binding site" evidence="1">
    <location>
        <position position="384"/>
    </location>
    <ligand>
        <name>Mn(2+)</name>
        <dbReference type="ChEBI" id="CHEBI:29035"/>
        <label>1</label>
    </ligand>
</feature>
<feature type="binding site" evidence="1">
    <location>
        <position position="423"/>
    </location>
    <ligand>
        <name>Mn(2+)</name>
        <dbReference type="ChEBI" id="CHEBI:29035"/>
        <label>1</label>
    </ligand>
</feature>
<feature type="binding site" evidence="1">
    <location>
        <position position="423"/>
    </location>
    <ligand>
        <name>Mn(2+)</name>
        <dbReference type="ChEBI" id="CHEBI:29035"/>
        <label>2</label>
    </ligand>
</feature>
<proteinExistence type="inferred from homology"/>
<evidence type="ECO:0000255" key="1">
    <source>
        <dbReference type="HAMAP-Rule" id="MF_01279"/>
    </source>
</evidence>
<name>PEPQ_YERPA</name>
<reference key="1">
    <citation type="journal article" date="2006" name="J. Bacteriol.">
        <title>Complete genome sequence of Yersinia pestis strains Antiqua and Nepal516: evidence of gene reduction in an emerging pathogen.</title>
        <authorList>
            <person name="Chain P.S.G."/>
            <person name="Hu P."/>
            <person name="Malfatti S.A."/>
            <person name="Radnedge L."/>
            <person name="Larimer F."/>
            <person name="Vergez L.M."/>
            <person name="Worsham P."/>
            <person name="Chu M.C."/>
            <person name="Andersen G.L."/>
        </authorList>
    </citation>
    <scope>NUCLEOTIDE SEQUENCE [LARGE SCALE GENOMIC DNA]</scope>
    <source>
        <strain>Antiqua</strain>
    </source>
</reference>
<organism>
    <name type="scientific">Yersinia pestis bv. Antiqua (strain Antiqua)</name>
    <dbReference type="NCBI Taxonomy" id="360102"/>
    <lineage>
        <taxon>Bacteria</taxon>
        <taxon>Pseudomonadati</taxon>
        <taxon>Pseudomonadota</taxon>
        <taxon>Gammaproteobacteria</taxon>
        <taxon>Enterobacterales</taxon>
        <taxon>Yersiniaceae</taxon>
        <taxon>Yersinia</taxon>
    </lineage>
</organism>
<accession>Q1C2C5</accession>
<dbReference type="EC" id="3.4.13.9" evidence="1"/>
<dbReference type="EMBL" id="CP000308">
    <property type="protein sequence ID" value="ABG15397.1"/>
    <property type="molecule type" value="Genomic_DNA"/>
</dbReference>
<dbReference type="PIR" id="AE0458">
    <property type="entry name" value="AE0458"/>
</dbReference>
<dbReference type="RefSeq" id="WP_002211547.1">
    <property type="nucleotide sequence ID" value="NZ_CP009906.1"/>
</dbReference>
<dbReference type="SMR" id="Q1C2C5"/>
<dbReference type="MEROPS" id="M24.003"/>
<dbReference type="GeneID" id="57974943"/>
<dbReference type="KEGG" id="ypa:YPA_3435"/>
<dbReference type="Proteomes" id="UP000001971">
    <property type="component" value="Chromosome"/>
</dbReference>
<dbReference type="GO" id="GO:0005829">
    <property type="term" value="C:cytosol"/>
    <property type="evidence" value="ECO:0007669"/>
    <property type="project" value="TreeGrafter"/>
</dbReference>
<dbReference type="GO" id="GO:0004177">
    <property type="term" value="F:aminopeptidase activity"/>
    <property type="evidence" value="ECO:0007669"/>
    <property type="project" value="TreeGrafter"/>
</dbReference>
<dbReference type="GO" id="GO:0046872">
    <property type="term" value="F:metal ion binding"/>
    <property type="evidence" value="ECO:0007669"/>
    <property type="project" value="UniProtKB-KW"/>
</dbReference>
<dbReference type="GO" id="GO:0008235">
    <property type="term" value="F:metalloexopeptidase activity"/>
    <property type="evidence" value="ECO:0007669"/>
    <property type="project" value="UniProtKB-UniRule"/>
</dbReference>
<dbReference type="GO" id="GO:0016795">
    <property type="term" value="F:phosphoric triester hydrolase activity"/>
    <property type="evidence" value="ECO:0007669"/>
    <property type="project" value="InterPro"/>
</dbReference>
<dbReference type="GO" id="GO:0102009">
    <property type="term" value="F:proline dipeptidase activity"/>
    <property type="evidence" value="ECO:0007669"/>
    <property type="project" value="UniProtKB-EC"/>
</dbReference>
<dbReference type="GO" id="GO:0006508">
    <property type="term" value="P:proteolysis"/>
    <property type="evidence" value="ECO:0007669"/>
    <property type="project" value="UniProtKB-KW"/>
</dbReference>
<dbReference type="Gene3D" id="3.90.230.10">
    <property type="entry name" value="Creatinase/methionine aminopeptidase superfamily"/>
    <property type="match status" value="1"/>
</dbReference>
<dbReference type="Gene3D" id="3.40.350.10">
    <property type="entry name" value="Creatinase/prolidase N-terminal domain"/>
    <property type="match status" value="1"/>
</dbReference>
<dbReference type="HAMAP" id="MF_01279">
    <property type="entry name" value="X_Pro_dipeptid"/>
    <property type="match status" value="1"/>
</dbReference>
<dbReference type="InterPro" id="IPR029149">
    <property type="entry name" value="Creatin/AminoP/Spt16_N"/>
</dbReference>
<dbReference type="InterPro" id="IPR036005">
    <property type="entry name" value="Creatinase/aminopeptidase-like"/>
</dbReference>
<dbReference type="InterPro" id="IPR048819">
    <property type="entry name" value="PepQ_N"/>
</dbReference>
<dbReference type="InterPro" id="IPR000994">
    <property type="entry name" value="Pept_M24"/>
</dbReference>
<dbReference type="InterPro" id="IPR001131">
    <property type="entry name" value="Peptidase_M24B_aminopep-P_CS"/>
</dbReference>
<dbReference type="InterPro" id="IPR052433">
    <property type="entry name" value="X-Pro_dipept-like"/>
</dbReference>
<dbReference type="InterPro" id="IPR022846">
    <property type="entry name" value="X_Pro_dipept"/>
</dbReference>
<dbReference type="NCBIfam" id="NF010133">
    <property type="entry name" value="PRK13607.1"/>
    <property type="match status" value="1"/>
</dbReference>
<dbReference type="PANTHER" id="PTHR43226">
    <property type="entry name" value="XAA-PRO AMINOPEPTIDASE 3"/>
    <property type="match status" value="1"/>
</dbReference>
<dbReference type="PANTHER" id="PTHR43226:SF8">
    <property type="entry name" value="XAA-PRO DIPEPTIDASE"/>
    <property type="match status" value="1"/>
</dbReference>
<dbReference type="Pfam" id="PF21216">
    <property type="entry name" value="PepQ_N"/>
    <property type="match status" value="1"/>
</dbReference>
<dbReference type="Pfam" id="PF00557">
    <property type="entry name" value="Peptidase_M24"/>
    <property type="match status" value="1"/>
</dbReference>
<dbReference type="SUPFAM" id="SSF55920">
    <property type="entry name" value="Creatinase/aminopeptidase"/>
    <property type="match status" value="1"/>
</dbReference>
<dbReference type="PROSITE" id="PS00491">
    <property type="entry name" value="PROLINE_PEPTIDASE"/>
    <property type="match status" value="1"/>
</dbReference>
<keyword id="KW-0224">Dipeptidase</keyword>
<keyword id="KW-0378">Hydrolase</keyword>
<keyword id="KW-0464">Manganese</keyword>
<keyword id="KW-0479">Metal-binding</keyword>
<keyword id="KW-0482">Metalloprotease</keyword>
<keyword id="KW-0645">Protease</keyword>